<sequence length="279" mass="29681">MDPNPRLLILLVLLAFSATVAVAEDGESTGGSKVSLGRRAGGFLHGLKKEAVVEGDHGVALDEVGPGLFDALFASLSMILVSEIGDETFIIAALMAMRHPKSIVLSGALSALYVMTVLSTGLGRIVPNLISRKHTNSAATVLYLFFGLRLLYIAWKSDPKGSQKKEMEEVEEKLESGQGKSTLRRFFGRFCTPIFLEAFILTFLAEWGDRSQIATIALATHKNAIGVAVGASLGHTVCTSLAVIGGSMLASKISQRTVATIGGVLFLGFSVSSYFYPPL</sequence>
<reference key="1">
    <citation type="journal article" date="2005" name="BMC Biol.">
        <title>The sequence of rice chromosomes 11 and 12, rich in disease resistance genes and recent gene duplications.</title>
        <authorList>
            <consortium name="The rice chromosomes 11 and 12 sequencing consortia"/>
        </authorList>
    </citation>
    <scope>NUCLEOTIDE SEQUENCE [LARGE SCALE GENOMIC DNA]</scope>
    <source>
        <strain>cv. Nipponbare</strain>
    </source>
</reference>
<reference key="2">
    <citation type="journal article" date="2005" name="Nature">
        <title>The map-based sequence of the rice genome.</title>
        <authorList>
            <consortium name="International rice genome sequencing project (IRGSP)"/>
        </authorList>
    </citation>
    <scope>NUCLEOTIDE SEQUENCE [LARGE SCALE GENOMIC DNA]</scope>
    <source>
        <strain>cv. Nipponbare</strain>
    </source>
</reference>
<reference key="3">
    <citation type="journal article" date="2008" name="Nucleic Acids Res.">
        <title>The rice annotation project database (RAP-DB): 2008 update.</title>
        <authorList>
            <consortium name="The rice annotation project (RAP)"/>
        </authorList>
    </citation>
    <scope>GENOME REANNOTATION</scope>
    <source>
        <strain>cv. Nipponbare</strain>
    </source>
</reference>
<reference key="4">
    <citation type="journal article" date="2013" name="Rice">
        <title>Improvement of the Oryza sativa Nipponbare reference genome using next generation sequence and optical map data.</title>
        <authorList>
            <person name="Kawahara Y."/>
            <person name="de la Bastide M."/>
            <person name="Hamilton J.P."/>
            <person name="Kanamori H."/>
            <person name="McCombie W.R."/>
            <person name="Ouyang S."/>
            <person name="Schwartz D.C."/>
            <person name="Tanaka T."/>
            <person name="Wu J."/>
            <person name="Zhou S."/>
            <person name="Childs K.L."/>
            <person name="Davidson R.M."/>
            <person name="Lin H."/>
            <person name="Quesada-Ocampo L."/>
            <person name="Vaillancourt B."/>
            <person name="Sakai H."/>
            <person name="Lee S.S."/>
            <person name="Kim J."/>
            <person name="Numa H."/>
            <person name="Itoh T."/>
            <person name="Buell C.R."/>
            <person name="Matsumoto T."/>
        </authorList>
    </citation>
    <scope>GENOME REANNOTATION</scope>
    <source>
        <strain>cv. Nipponbare</strain>
    </source>
</reference>
<reference key="5">
    <citation type="journal article" date="2005" name="PLoS Biol.">
        <title>The genomes of Oryza sativa: a history of duplications.</title>
        <authorList>
            <person name="Yu J."/>
            <person name="Wang J."/>
            <person name="Lin W."/>
            <person name="Li S."/>
            <person name="Li H."/>
            <person name="Zhou J."/>
            <person name="Ni P."/>
            <person name="Dong W."/>
            <person name="Hu S."/>
            <person name="Zeng C."/>
            <person name="Zhang J."/>
            <person name="Zhang Y."/>
            <person name="Li R."/>
            <person name="Xu Z."/>
            <person name="Li S."/>
            <person name="Li X."/>
            <person name="Zheng H."/>
            <person name="Cong L."/>
            <person name="Lin L."/>
            <person name="Yin J."/>
            <person name="Geng J."/>
            <person name="Li G."/>
            <person name="Shi J."/>
            <person name="Liu J."/>
            <person name="Lv H."/>
            <person name="Li J."/>
            <person name="Wang J."/>
            <person name="Deng Y."/>
            <person name="Ran L."/>
            <person name="Shi X."/>
            <person name="Wang X."/>
            <person name="Wu Q."/>
            <person name="Li C."/>
            <person name="Ren X."/>
            <person name="Wang J."/>
            <person name="Wang X."/>
            <person name="Li D."/>
            <person name="Liu D."/>
            <person name="Zhang X."/>
            <person name="Ji Z."/>
            <person name="Zhao W."/>
            <person name="Sun Y."/>
            <person name="Zhang Z."/>
            <person name="Bao J."/>
            <person name="Han Y."/>
            <person name="Dong L."/>
            <person name="Ji J."/>
            <person name="Chen P."/>
            <person name="Wu S."/>
            <person name="Liu J."/>
            <person name="Xiao Y."/>
            <person name="Bu D."/>
            <person name="Tan J."/>
            <person name="Yang L."/>
            <person name="Ye C."/>
            <person name="Zhang J."/>
            <person name="Xu J."/>
            <person name="Zhou Y."/>
            <person name="Yu Y."/>
            <person name="Zhang B."/>
            <person name="Zhuang S."/>
            <person name="Wei H."/>
            <person name="Liu B."/>
            <person name="Lei M."/>
            <person name="Yu H."/>
            <person name="Li Y."/>
            <person name="Xu H."/>
            <person name="Wei S."/>
            <person name="He X."/>
            <person name="Fang L."/>
            <person name="Zhang Z."/>
            <person name="Zhang Y."/>
            <person name="Huang X."/>
            <person name="Su Z."/>
            <person name="Tong W."/>
            <person name="Li J."/>
            <person name="Tong Z."/>
            <person name="Li S."/>
            <person name="Ye J."/>
            <person name="Wang L."/>
            <person name="Fang L."/>
            <person name="Lei T."/>
            <person name="Chen C.-S."/>
            <person name="Chen H.-C."/>
            <person name="Xu Z."/>
            <person name="Li H."/>
            <person name="Huang H."/>
            <person name="Zhang F."/>
            <person name="Xu H."/>
            <person name="Li N."/>
            <person name="Zhao C."/>
            <person name="Li S."/>
            <person name="Dong L."/>
            <person name="Huang Y."/>
            <person name="Li L."/>
            <person name="Xi Y."/>
            <person name="Qi Q."/>
            <person name="Li W."/>
            <person name="Zhang B."/>
            <person name="Hu W."/>
            <person name="Zhang Y."/>
            <person name="Tian X."/>
            <person name="Jiao Y."/>
            <person name="Liang X."/>
            <person name="Jin J."/>
            <person name="Gao L."/>
            <person name="Zheng W."/>
            <person name="Hao B."/>
            <person name="Liu S.-M."/>
            <person name="Wang W."/>
            <person name="Yuan L."/>
            <person name="Cao M."/>
            <person name="McDermott J."/>
            <person name="Samudrala R."/>
            <person name="Wang J."/>
            <person name="Wong G.K.-S."/>
            <person name="Yang H."/>
        </authorList>
    </citation>
    <scope>NUCLEOTIDE SEQUENCE [LARGE SCALE GENOMIC DNA]</scope>
    <source>
        <strain>cv. Nipponbare</strain>
    </source>
</reference>
<reference key="6">
    <citation type="journal article" date="2003" name="Science">
        <title>Collection, mapping, and annotation of over 28,000 cDNA clones from japonica rice.</title>
        <authorList>
            <consortium name="The rice full-length cDNA consortium"/>
        </authorList>
    </citation>
    <scope>NUCLEOTIDE SEQUENCE [LARGE SCALE MRNA]</scope>
    <source>
        <strain>cv. Nipponbare</strain>
    </source>
</reference>
<feature type="signal peptide" evidence="1">
    <location>
        <begin position="1"/>
        <end position="23"/>
    </location>
</feature>
<feature type="chain" id="PRO_0000398773" description="GDT1-like protein 3">
    <location>
        <begin position="24"/>
        <end position="279"/>
    </location>
</feature>
<feature type="transmembrane region" description="Helical" evidence="1">
    <location>
        <begin position="64"/>
        <end position="84"/>
    </location>
</feature>
<feature type="transmembrane region" description="Helical" evidence="1">
    <location>
        <begin position="103"/>
        <end position="123"/>
    </location>
</feature>
<feature type="transmembrane region" description="Helical" evidence="1">
    <location>
        <begin position="135"/>
        <end position="155"/>
    </location>
</feature>
<feature type="transmembrane region" description="Helical" evidence="1">
    <location>
        <begin position="186"/>
        <end position="206"/>
    </location>
</feature>
<feature type="transmembrane region" description="Helical" evidence="1">
    <location>
        <begin position="224"/>
        <end position="244"/>
    </location>
</feature>
<feature type="transmembrane region" description="Helical" evidence="1">
    <location>
        <begin position="258"/>
        <end position="278"/>
    </location>
</feature>
<evidence type="ECO:0000255" key="1"/>
<evidence type="ECO:0000305" key="2"/>
<accession>Q2R4J1</accession>
<accession>A0A0P0Y263</accession>
<dbReference type="EMBL" id="DP000010">
    <property type="protein sequence ID" value="ABA93653.1"/>
    <property type="molecule type" value="Genomic_DNA"/>
</dbReference>
<dbReference type="EMBL" id="AP008217">
    <property type="protein sequence ID" value="BAF28243.1"/>
    <property type="molecule type" value="Genomic_DNA"/>
</dbReference>
<dbReference type="EMBL" id="AP014967">
    <property type="protein sequence ID" value="BAT13992.1"/>
    <property type="molecule type" value="Genomic_DNA"/>
</dbReference>
<dbReference type="EMBL" id="CM000148">
    <property type="protein sequence ID" value="EAZ18323.1"/>
    <property type="molecule type" value="Genomic_DNA"/>
</dbReference>
<dbReference type="EMBL" id="AK061749">
    <property type="protein sequence ID" value="BAG88089.1"/>
    <property type="molecule type" value="mRNA"/>
</dbReference>
<dbReference type="EMBL" id="AK073686">
    <property type="protein sequence ID" value="BAG93591.1"/>
    <property type="molecule type" value="mRNA"/>
</dbReference>
<dbReference type="EMBL" id="AK104618">
    <property type="protein sequence ID" value="BAG96838.1"/>
    <property type="molecule type" value="mRNA"/>
</dbReference>
<dbReference type="RefSeq" id="XP_015617899.1">
    <property type="nucleotide sequence ID" value="XM_015762413.1"/>
</dbReference>
<dbReference type="FunCoup" id="Q2R4J1">
    <property type="interactions" value="2848"/>
</dbReference>
<dbReference type="PaxDb" id="39947-Q2R4J1"/>
<dbReference type="EnsemblPlants" id="Os11t0472500-01">
    <property type="protein sequence ID" value="Os11t0472500-01"/>
    <property type="gene ID" value="Os11g0472500"/>
</dbReference>
<dbReference type="EnsemblPlants" id="Os11t0472500-02">
    <property type="protein sequence ID" value="Os11t0472500-02"/>
    <property type="gene ID" value="Os11g0472500"/>
</dbReference>
<dbReference type="Gramene" id="Os11t0472500-01">
    <property type="protein sequence ID" value="Os11t0472500-01"/>
    <property type="gene ID" value="Os11g0472500"/>
</dbReference>
<dbReference type="Gramene" id="Os11t0472500-02">
    <property type="protein sequence ID" value="Os11t0472500-02"/>
    <property type="gene ID" value="Os11g0472500"/>
</dbReference>
<dbReference type="KEGG" id="dosa:Os11g0472500"/>
<dbReference type="eggNOG" id="KOG2881">
    <property type="taxonomic scope" value="Eukaryota"/>
</dbReference>
<dbReference type="HOGENOM" id="CLU_040186_0_1_1"/>
<dbReference type="InParanoid" id="Q2R4J1"/>
<dbReference type="OMA" id="CSNVIMG"/>
<dbReference type="OrthoDB" id="442680at2759"/>
<dbReference type="Proteomes" id="UP000000763">
    <property type="component" value="Chromosome 11"/>
</dbReference>
<dbReference type="Proteomes" id="UP000007752">
    <property type="component" value="Chromosome 11"/>
</dbReference>
<dbReference type="Proteomes" id="UP000059680">
    <property type="component" value="Chromosome 11"/>
</dbReference>
<dbReference type="GO" id="GO:0005794">
    <property type="term" value="C:Golgi apparatus"/>
    <property type="evidence" value="ECO:0000318"/>
    <property type="project" value="GO_Central"/>
</dbReference>
<dbReference type="GO" id="GO:0016020">
    <property type="term" value="C:membrane"/>
    <property type="evidence" value="ECO:0007669"/>
    <property type="project" value="UniProtKB-SubCell"/>
</dbReference>
<dbReference type="GO" id="GO:0015085">
    <property type="term" value="F:calcium ion transmembrane transporter activity"/>
    <property type="evidence" value="ECO:0000318"/>
    <property type="project" value="GO_Central"/>
</dbReference>
<dbReference type="GO" id="GO:0005384">
    <property type="term" value="F:manganese ion transmembrane transporter activity"/>
    <property type="evidence" value="ECO:0000318"/>
    <property type="project" value="GO_Central"/>
</dbReference>
<dbReference type="GO" id="GO:0070588">
    <property type="term" value="P:calcium ion transmembrane transport"/>
    <property type="evidence" value="ECO:0000318"/>
    <property type="project" value="GO_Central"/>
</dbReference>
<dbReference type="GO" id="GO:0032468">
    <property type="term" value="P:Golgi calcium ion homeostasis"/>
    <property type="evidence" value="ECO:0000318"/>
    <property type="project" value="GO_Central"/>
</dbReference>
<dbReference type="GO" id="GO:0032472">
    <property type="term" value="P:Golgi calcium ion transport"/>
    <property type="evidence" value="ECO:0000318"/>
    <property type="project" value="GO_Central"/>
</dbReference>
<dbReference type="GO" id="GO:0071421">
    <property type="term" value="P:manganese ion transmembrane transport"/>
    <property type="evidence" value="ECO:0000318"/>
    <property type="project" value="GO_Central"/>
</dbReference>
<dbReference type="InterPro" id="IPR001727">
    <property type="entry name" value="GDT1-like"/>
</dbReference>
<dbReference type="PANTHER" id="PTHR12608:SF5">
    <property type="entry name" value="GDT1-LIKE PROTEIN 3"/>
    <property type="match status" value="1"/>
</dbReference>
<dbReference type="PANTHER" id="PTHR12608">
    <property type="entry name" value="TRANSMEMBRANE PROTEIN HTP-1 RELATED"/>
    <property type="match status" value="1"/>
</dbReference>
<dbReference type="Pfam" id="PF01169">
    <property type="entry name" value="GDT1"/>
    <property type="match status" value="2"/>
</dbReference>
<name>GDT13_ORYSJ</name>
<gene>
    <name type="ordered locus">Os11g0472500</name>
    <name type="ordered locus">LOC_Os11g28300</name>
    <name type="ORF">OsJ_33855</name>
</gene>
<protein>
    <recommendedName>
        <fullName>GDT1-like protein 3</fullName>
    </recommendedName>
</protein>
<organism>
    <name type="scientific">Oryza sativa subsp. japonica</name>
    <name type="common">Rice</name>
    <dbReference type="NCBI Taxonomy" id="39947"/>
    <lineage>
        <taxon>Eukaryota</taxon>
        <taxon>Viridiplantae</taxon>
        <taxon>Streptophyta</taxon>
        <taxon>Embryophyta</taxon>
        <taxon>Tracheophyta</taxon>
        <taxon>Spermatophyta</taxon>
        <taxon>Magnoliopsida</taxon>
        <taxon>Liliopsida</taxon>
        <taxon>Poales</taxon>
        <taxon>Poaceae</taxon>
        <taxon>BOP clade</taxon>
        <taxon>Oryzoideae</taxon>
        <taxon>Oryzeae</taxon>
        <taxon>Oryzinae</taxon>
        <taxon>Oryza</taxon>
        <taxon>Oryza sativa</taxon>
    </lineage>
</organism>
<keyword id="KW-0472">Membrane</keyword>
<keyword id="KW-1185">Reference proteome</keyword>
<keyword id="KW-0732">Signal</keyword>
<keyword id="KW-0812">Transmembrane</keyword>
<keyword id="KW-1133">Transmembrane helix</keyword>
<proteinExistence type="evidence at transcript level"/>
<comment type="subcellular location">
    <subcellularLocation>
        <location evidence="2">Membrane</location>
        <topology evidence="2">Multi-pass membrane protein</topology>
    </subcellularLocation>
</comment>
<comment type="similarity">
    <text evidence="2">Belongs to the GDT1 family.</text>
</comment>